<comment type="function">
    <text evidence="1">Binds the lower part of the 30S subunit head. Binds mRNA in the 70S ribosome, positioning it for translation.</text>
</comment>
<comment type="subunit">
    <text evidence="1">Part of the 30S ribosomal subunit. Forms a tight complex with proteins S10 and S14.</text>
</comment>
<comment type="similarity">
    <text evidence="1">Belongs to the universal ribosomal protein uS3 family.</text>
</comment>
<organism>
    <name type="scientific">Clostridium botulinum (strain 657 / Type Ba4)</name>
    <dbReference type="NCBI Taxonomy" id="515621"/>
    <lineage>
        <taxon>Bacteria</taxon>
        <taxon>Bacillati</taxon>
        <taxon>Bacillota</taxon>
        <taxon>Clostridia</taxon>
        <taxon>Eubacteriales</taxon>
        <taxon>Clostridiaceae</taxon>
        <taxon>Clostridium</taxon>
    </lineage>
</organism>
<keyword id="KW-0687">Ribonucleoprotein</keyword>
<keyword id="KW-0689">Ribosomal protein</keyword>
<keyword id="KW-0694">RNA-binding</keyword>
<keyword id="KW-0699">rRNA-binding</keyword>
<accession>C3KVP5</accession>
<proteinExistence type="inferred from homology"/>
<dbReference type="EMBL" id="CP001083">
    <property type="protein sequence ID" value="ACQ54358.1"/>
    <property type="molecule type" value="Genomic_DNA"/>
</dbReference>
<dbReference type="RefSeq" id="WP_003360197.1">
    <property type="nucleotide sequence ID" value="NC_012658.1"/>
</dbReference>
<dbReference type="SMR" id="C3KVP5"/>
<dbReference type="KEGG" id="cbi:CLJ_B3783"/>
<dbReference type="HOGENOM" id="CLU_058591_0_2_9"/>
<dbReference type="Proteomes" id="UP000002333">
    <property type="component" value="Chromosome"/>
</dbReference>
<dbReference type="GO" id="GO:0022627">
    <property type="term" value="C:cytosolic small ribosomal subunit"/>
    <property type="evidence" value="ECO:0007669"/>
    <property type="project" value="TreeGrafter"/>
</dbReference>
<dbReference type="GO" id="GO:0003729">
    <property type="term" value="F:mRNA binding"/>
    <property type="evidence" value="ECO:0007669"/>
    <property type="project" value="UniProtKB-UniRule"/>
</dbReference>
<dbReference type="GO" id="GO:0019843">
    <property type="term" value="F:rRNA binding"/>
    <property type="evidence" value="ECO:0007669"/>
    <property type="project" value="UniProtKB-UniRule"/>
</dbReference>
<dbReference type="GO" id="GO:0003735">
    <property type="term" value="F:structural constituent of ribosome"/>
    <property type="evidence" value="ECO:0007669"/>
    <property type="project" value="InterPro"/>
</dbReference>
<dbReference type="GO" id="GO:0006412">
    <property type="term" value="P:translation"/>
    <property type="evidence" value="ECO:0007669"/>
    <property type="project" value="UniProtKB-UniRule"/>
</dbReference>
<dbReference type="CDD" id="cd02412">
    <property type="entry name" value="KH-II_30S_S3"/>
    <property type="match status" value="1"/>
</dbReference>
<dbReference type="FunFam" id="3.30.1140.32:FF:000002">
    <property type="entry name" value="30S ribosomal protein S3"/>
    <property type="match status" value="1"/>
</dbReference>
<dbReference type="FunFam" id="3.30.300.20:FF:000001">
    <property type="entry name" value="30S ribosomal protein S3"/>
    <property type="match status" value="1"/>
</dbReference>
<dbReference type="Gene3D" id="3.30.300.20">
    <property type="match status" value="1"/>
</dbReference>
<dbReference type="Gene3D" id="3.30.1140.32">
    <property type="entry name" value="Ribosomal protein S3, C-terminal domain"/>
    <property type="match status" value="1"/>
</dbReference>
<dbReference type="HAMAP" id="MF_01309_B">
    <property type="entry name" value="Ribosomal_uS3_B"/>
    <property type="match status" value="1"/>
</dbReference>
<dbReference type="InterPro" id="IPR004087">
    <property type="entry name" value="KH_dom"/>
</dbReference>
<dbReference type="InterPro" id="IPR015946">
    <property type="entry name" value="KH_dom-like_a/b"/>
</dbReference>
<dbReference type="InterPro" id="IPR004044">
    <property type="entry name" value="KH_dom_type_2"/>
</dbReference>
<dbReference type="InterPro" id="IPR009019">
    <property type="entry name" value="KH_sf_prok-type"/>
</dbReference>
<dbReference type="InterPro" id="IPR036419">
    <property type="entry name" value="Ribosomal_S3_C_sf"/>
</dbReference>
<dbReference type="InterPro" id="IPR005704">
    <property type="entry name" value="Ribosomal_uS3_bac-typ"/>
</dbReference>
<dbReference type="InterPro" id="IPR001351">
    <property type="entry name" value="Ribosomal_uS3_C"/>
</dbReference>
<dbReference type="InterPro" id="IPR018280">
    <property type="entry name" value="Ribosomal_uS3_CS"/>
</dbReference>
<dbReference type="NCBIfam" id="TIGR01009">
    <property type="entry name" value="rpsC_bact"/>
    <property type="match status" value="1"/>
</dbReference>
<dbReference type="PANTHER" id="PTHR11760">
    <property type="entry name" value="30S/40S RIBOSOMAL PROTEIN S3"/>
    <property type="match status" value="1"/>
</dbReference>
<dbReference type="PANTHER" id="PTHR11760:SF19">
    <property type="entry name" value="SMALL RIBOSOMAL SUBUNIT PROTEIN US3C"/>
    <property type="match status" value="1"/>
</dbReference>
<dbReference type="Pfam" id="PF07650">
    <property type="entry name" value="KH_2"/>
    <property type="match status" value="1"/>
</dbReference>
<dbReference type="Pfam" id="PF00189">
    <property type="entry name" value="Ribosomal_S3_C"/>
    <property type="match status" value="1"/>
</dbReference>
<dbReference type="SMART" id="SM00322">
    <property type="entry name" value="KH"/>
    <property type="match status" value="1"/>
</dbReference>
<dbReference type="SUPFAM" id="SSF54814">
    <property type="entry name" value="Prokaryotic type KH domain (KH-domain type II)"/>
    <property type="match status" value="1"/>
</dbReference>
<dbReference type="SUPFAM" id="SSF54821">
    <property type="entry name" value="Ribosomal protein S3 C-terminal domain"/>
    <property type="match status" value="1"/>
</dbReference>
<dbReference type="PROSITE" id="PS50823">
    <property type="entry name" value="KH_TYPE_2"/>
    <property type="match status" value="1"/>
</dbReference>
<dbReference type="PROSITE" id="PS00548">
    <property type="entry name" value="RIBOSOMAL_S3"/>
    <property type="match status" value="1"/>
</dbReference>
<evidence type="ECO:0000255" key="1">
    <source>
        <dbReference type="HAMAP-Rule" id="MF_01309"/>
    </source>
</evidence>
<evidence type="ECO:0000305" key="2"/>
<gene>
    <name evidence="1" type="primary">rpsC</name>
    <name type="ordered locus">CLJ_B3783</name>
</gene>
<sequence>MGQKVHPHGLRVGVIKEWDAKWYADKKNFADNLVEDHKIRNFVKKNSYAAGVSRIEIERAAKRIKLNIYTAKPGMIIGKGGQGIESLKNQLQKIVSNKNILINIVEVKRPEADAQLIAENIAQQLEKRIAFRRAMKQSIQRAMKSGVKGIKTACSGRLAGAEIARTEHYNEGTIPLQTLRADIDYGFAEADTTYGKIGVKVWVYKGEVLPARKNINEKEEANA</sequence>
<feature type="chain" id="PRO_1000214330" description="Small ribosomal subunit protein uS3">
    <location>
        <begin position="1"/>
        <end position="223"/>
    </location>
</feature>
<feature type="domain" description="KH type-2" evidence="1">
    <location>
        <begin position="39"/>
        <end position="108"/>
    </location>
</feature>
<protein>
    <recommendedName>
        <fullName evidence="1">Small ribosomal subunit protein uS3</fullName>
    </recommendedName>
    <alternativeName>
        <fullName evidence="2">30S ribosomal protein S3</fullName>
    </alternativeName>
</protein>
<name>RS3_CLOB6</name>
<reference key="1">
    <citation type="submission" date="2008-05" db="EMBL/GenBank/DDBJ databases">
        <title>Genome sequence of Clostridium botulinum Ba4 strain 657.</title>
        <authorList>
            <person name="Shrivastava S."/>
            <person name="Brown J.L."/>
            <person name="Bruce D."/>
            <person name="Detter C."/>
            <person name="Munk C."/>
            <person name="Smith L.A."/>
            <person name="Smith T.J."/>
            <person name="Sutton G."/>
            <person name="Brettin T.S."/>
        </authorList>
    </citation>
    <scope>NUCLEOTIDE SEQUENCE [LARGE SCALE GENOMIC DNA]</scope>
    <source>
        <strain>657 / Type Ba4</strain>
    </source>
</reference>